<proteinExistence type="inferred from homology"/>
<reference key="1">
    <citation type="journal article" date="2009" name="Appl. Environ. Microbiol.">
        <title>Three genomes from the phylum Acidobacteria provide insight into the lifestyles of these microorganisms in soils.</title>
        <authorList>
            <person name="Ward N.L."/>
            <person name="Challacombe J.F."/>
            <person name="Janssen P.H."/>
            <person name="Henrissat B."/>
            <person name="Coutinho P.M."/>
            <person name="Wu M."/>
            <person name="Xie G."/>
            <person name="Haft D.H."/>
            <person name="Sait M."/>
            <person name="Badger J."/>
            <person name="Barabote R.D."/>
            <person name="Bradley B."/>
            <person name="Brettin T.S."/>
            <person name="Brinkac L.M."/>
            <person name="Bruce D."/>
            <person name="Creasy T."/>
            <person name="Daugherty S.C."/>
            <person name="Davidsen T.M."/>
            <person name="DeBoy R.T."/>
            <person name="Detter J.C."/>
            <person name="Dodson R.J."/>
            <person name="Durkin A.S."/>
            <person name="Ganapathy A."/>
            <person name="Gwinn-Giglio M."/>
            <person name="Han C.S."/>
            <person name="Khouri H."/>
            <person name="Kiss H."/>
            <person name="Kothari S.P."/>
            <person name="Madupu R."/>
            <person name="Nelson K.E."/>
            <person name="Nelson W.C."/>
            <person name="Paulsen I."/>
            <person name="Penn K."/>
            <person name="Ren Q."/>
            <person name="Rosovitz M.J."/>
            <person name="Selengut J.D."/>
            <person name="Shrivastava S."/>
            <person name="Sullivan S.A."/>
            <person name="Tapia R."/>
            <person name="Thompson L.S."/>
            <person name="Watkins K.L."/>
            <person name="Yang Q."/>
            <person name="Yu C."/>
            <person name="Zafar N."/>
            <person name="Zhou L."/>
            <person name="Kuske C.R."/>
        </authorList>
    </citation>
    <scope>NUCLEOTIDE SEQUENCE [LARGE SCALE GENOMIC DNA]</scope>
    <source>
        <strain>Ellin345</strain>
    </source>
</reference>
<gene>
    <name evidence="1" type="primary">nuoD2</name>
    <name type="ordered locus">Acid345_1313</name>
</gene>
<sequence>MAHMNPTPVLEAGQDKTMVLNMGPQHPSTHGVLRLLLEIDGETIVRIMPDIGYLHTGIEKTCEAKFYQQVVPMTDRIDYLCPMTNNLAYVLAVEKLLGLEIPERAQWIRVLCNELTRINSHLVWLGTGAMDLGAMTVFLYCFREREELLKLFEAVAGQRMMTSYFRVGGVSLEPPLGWFDRVKKFADTFPSKMDEYEGLLTQNPIFVMRTKGVAKITKEDALALGASGPTLRGSGIDFDLRRDMPYSGYDKFKFNVPVKTEGDVYARYQCRIAELRESCKIVQQALAGMPEGSIKADAPKVVLPDREKMKTQMESLIYHFKIVTEGFTVPPGEVYSAIESPRGEMGYYIVSDGTAKPYRVHMRSPSFANLQMLPSMCTGQLLADVVAAIGSIDIVLGDCDR</sequence>
<dbReference type="EC" id="7.1.1.-" evidence="1"/>
<dbReference type="EMBL" id="CP000360">
    <property type="protein sequence ID" value="ABF40315.1"/>
    <property type="molecule type" value="Genomic_DNA"/>
</dbReference>
<dbReference type="RefSeq" id="WP_011522117.1">
    <property type="nucleotide sequence ID" value="NC_008009.1"/>
</dbReference>
<dbReference type="SMR" id="Q1IS35"/>
<dbReference type="STRING" id="204669.Acid345_1313"/>
<dbReference type="EnsemblBacteria" id="ABF40315">
    <property type="protein sequence ID" value="ABF40315"/>
    <property type="gene ID" value="Acid345_1313"/>
</dbReference>
<dbReference type="KEGG" id="aba:Acid345_1313"/>
<dbReference type="eggNOG" id="COG0649">
    <property type="taxonomic scope" value="Bacteria"/>
</dbReference>
<dbReference type="HOGENOM" id="CLU_015134_1_2_0"/>
<dbReference type="OrthoDB" id="9801496at2"/>
<dbReference type="Proteomes" id="UP000002432">
    <property type="component" value="Chromosome"/>
</dbReference>
<dbReference type="GO" id="GO:0005886">
    <property type="term" value="C:plasma membrane"/>
    <property type="evidence" value="ECO:0007669"/>
    <property type="project" value="UniProtKB-SubCell"/>
</dbReference>
<dbReference type="GO" id="GO:0051287">
    <property type="term" value="F:NAD binding"/>
    <property type="evidence" value="ECO:0007669"/>
    <property type="project" value="InterPro"/>
</dbReference>
<dbReference type="GO" id="GO:0050136">
    <property type="term" value="F:NADH:ubiquinone reductase (non-electrogenic) activity"/>
    <property type="evidence" value="ECO:0007669"/>
    <property type="project" value="UniProtKB-UniRule"/>
</dbReference>
<dbReference type="GO" id="GO:0048038">
    <property type="term" value="F:quinone binding"/>
    <property type="evidence" value="ECO:0007669"/>
    <property type="project" value="UniProtKB-KW"/>
</dbReference>
<dbReference type="Gene3D" id="1.10.645.10">
    <property type="entry name" value="Cytochrome-c3 Hydrogenase, chain B"/>
    <property type="match status" value="1"/>
</dbReference>
<dbReference type="HAMAP" id="MF_01358">
    <property type="entry name" value="NDH1_NuoD"/>
    <property type="match status" value="1"/>
</dbReference>
<dbReference type="InterPro" id="IPR001135">
    <property type="entry name" value="NADH_Q_OxRdtase_suD"/>
</dbReference>
<dbReference type="InterPro" id="IPR014029">
    <property type="entry name" value="NADH_UbQ_OxRdtase_49kDa_CS"/>
</dbReference>
<dbReference type="InterPro" id="IPR022885">
    <property type="entry name" value="NDH1_su_D/H"/>
</dbReference>
<dbReference type="InterPro" id="IPR029014">
    <property type="entry name" value="NiFe-Hase_large"/>
</dbReference>
<dbReference type="NCBIfam" id="TIGR01962">
    <property type="entry name" value="NuoD"/>
    <property type="match status" value="1"/>
</dbReference>
<dbReference type="NCBIfam" id="NF004739">
    <property type="entry name" value="PRK06075.1"/>
    <property type="match status" value="1"/>
</dbReference>
<dbReference type="PANTHER" id="PTHR11993:SF10">
    <property type="entry name" value="NADH DEHYDROGENASE [UBIQUINONE] IRON-SULFUR PROTEIN 2, MITOCHONDRIAL"/>
    <property type="match status" value="1"/>
</dbReference>
<dbReference type="PANTHER" id="PTHR11993">
    <property type="entry name" value="NADH-UBIQUINONE OXIDOREDUCTASE 49 KDA SUBUNIT"/>
    <property type="match status" value="1"/>
</dbReference>
<dbReference type="Pfam" id="PF00346">
    <property type="entry name" value="Complex1_49kDa"/>
    <property type="match status" value="1"/>
</dbReference>
<dbReference type="SUPFAM" id="SSF56762">
    <property type="entry name" value="HydB/Nqo4-like"/>
    <property type="match status" value="1"/>
</dbReference>
<dbReference type="PROSITE" id="PS00535">
    <property type="entry name" value="COMPLEX1_49K"/>
    <property type="match status" value="1"/>
</dbReference>
<protein>
    <recommendedName>
        <fullName evidence="1">NADH-quinone oxidoreductase subunit D 2</fullName>
        <ecNumber evidence="1">7.1.1.-</ecNumber>
    </recommendedName>
    <alternativeName>
        <fullName evidence="1">NADH dehydrogenase I subunit D 2</fullName>
    </alternativeName>
    <alternativeName>
        <fullName evidence="1">NDH-1 subunit D 2</fullName>
    </alternativeName>
</protein>
<feature type="chain" id="PRO_0000357749" description="NADH-quinone oxidoreductase subunit D 2">
    <location>
        <begin position="1"/>
        <end position="401"/>
    </location>
</feature>
<organism>
    <name type="scientific">Koribacter versatilis (strain Ellin345)</name>
    <dbReference type="NCBI Taxonomy" id="204669"/>
    <lineage>
        <taxon>Bacteria</taxon>
        <taxon>Pseudomonadati</taxon>
        <taxon>Acidobacteriota</taxon>
        <taxon>Terriglobia</taxon>
        <taxon>Terriglobales</taxon>
        <taxon>Candidatus Korobacteraceae</taxon>
        <taxon>Candidatus Korobacter</taxon>
    </lineage>
</organism>
<comment type="function">
    <text evidence="1">NDH-1 shuttles electrons from NADH, via FMN and iron-sulfur (Fe-S) centers, to quinones in the respiratory chain. The immediate electron acceptor for the enzyme in this species is believed to be ubiquinone. Couples the redox reaction to proton translocation (for every two electrons transferred, four hydrogen ions are translocated across the cytoplasmic membrane), and thus conserves the redox energy in a proton gradient.</text>
</comment>
<comment type="catalytic activity">
    <reaction evidence="1">
        <text>a quinone + NADH + 5 H(+)(in) = a quinol + NAD(+) + 4 H(+)(out)</text>
        <dbReference type="Rhea" id="RHEA:57888"/>
        <dbReference type="ChEBI" id="CHEBI:15378"/>
        <dbReference type="ChEBI" id="CHEBI:24646"/>
        <dbReference type="ChEBI" id="CHEBI:57540"/>
        <dbReference type="ChEBI" id="CHEBI:57945"/>
        <dbReference type="ChEBI" id="CHEBI:132124"/>
    </reaction>
</comment>
<comment type="subunit">
    <text evidence="1">NDH-1 is composed of 14 different subunits. Subunits NuoB, C, D, E, F, and G constitute the peripheral sector of the complex.</text>
</comment>
<comment type="subcellular location">
    <subcellularLocation>
        <location evidence="1">Cell inner membrane</location>
        <topology evidence="1">Peripheral membrane protein</topology>
        <orientation evidence="1">Cytoplasmic side</orientation>
    </subcellularLocation>
</comment>
<comment type="similarity">
    <text evidence="1">Belongs to the complex I 49 kDa subunit family.</text>
</comment>
<evidence type="ECO:0000255" key="1">
    <source>
        <dbReference type="HAMAP-Rule" id="MF_01358"/>
    </source>
</evidence>
<name>NUOD2_KORVE</name>
<accession>Q1IS35</accession>
<keyword id="KW-0997">Cell inner membrane</keyword>
<keyword id="KW-1003">Cell membrane</keyword>
<keyword id="KW-0472">Membrane</keyword>
<keyword id="KW-0520">NAD</keyword>
<keyword id="KW-0874">Quinone</keyword>
<keyword id="KW-1185">Reference proteome</keyword>
<keyword id="KW-1278">Translocase</keyword>
<keyword id="KW-0813">Transport</keyword>
<keyword id="KW-0830">Ubiquinone</keyword>